<proteinExistence type="inferred from homology"/>
<dbReference type="EMBL" id="X74462">
    <property type="protein sequence ID" value="CAA52474.1"/>
    <property type="molecule type" value="Genomic_DNA"/>
</dbReference>
<dbReference type="PIR" id="S36554">
    <property type="entry name" value="S36554"/>
</dbReference>
<dbReference type="SMR" id="P36731"/>
<dbReference type="Proteomes" id="UP000007706">
    <property type="component" value="Genome"/>
</dbReference>
<dbReference type="GO" id="GO:0042025">
    <property type="term" value="C:host cell nucleus"/>
    <property type="evidence" value="ECO:0007669"/>
    <property type="project" value="UniProtKB-SubCell"/>
</dbReference>
<dbReference type="GO" id="GO:0039620">
    <property type="term" value="C:T=7 icosahedral viral capsid"/>
    <property type="evidence" value="ECO:0007669"/>
    <property type="project" value="UniProtKB-UniRule"/>
</dbReference>
<dbReference type="GO" id="GO:0005198">
    <property type="term" value="F:structural molecule activity"/>
    <property type="evidence" value="ECO:0007669"/>
    <property type="project" value="UniProtKB-UniRule"/>
</dbReference>
<dbReference type="GO" id="GO:0075509">
    <property type="term" value="P:endocytosis involved in viral entry into host cell"/>
    <property type="evidence" value="ECO:0007669"/>
    <property type="project" value="UniProtKB-KW"/>
</dbReference>
<dbReference type="GO" id="GO:0019062">
    <property type="term" value="P:virion attachment to host cell"/>
    <property type="evidence" value="ECO:0007669"/>
    <property type="project" value="UniProtKB-UniRule"/>
</dbReference>
<dbReference type="Gene3D" id="2.60.175.20">
    <property type="entry name" value="Major capsid L1 (late) superfamily, Papillomavirus"/>
    <property type="match status" value="2"/>
</dbReference>
<dbReference type="HAMAP" id="MF_04002">
    <property type="entry name" value="PPV_L1"/>
    <property type="match status" value="1"/>
</dbReference>
<dbReference type="InterPro" id="IPR002210">
    <property type="entry name" value="Capsid_L1_Papillomavir"/>
</dbReference>
<dbReference type="InterPro" id="IPR036973">
    <property type="entry name" value="Capsid_L1_sf_Papillomavir"/>
</dbReference>
<dbReference type="InterPro" id="IPR011222">
    <property type="entry name" value="dsDNA_vir_gr_I_capsid"/>
</dbReference>
<dbReference type="Pfam" id="PF00500">
    <property type="entry name" value="Late_protein_L1"/>
    <property type="match status" value="1"/>
</dbReference>
<dbReference type="PRINTS" id="PR00865">
    <property type="entry name" value="HPVCAPSIDL1"/>
</dbReference>
<dbReference type="SUPFAM" id="SSF88648">
    <property type="entry name" value="Group I dsDNA viruses"/>
    <property type="match status" value="1"/>
</dbReference>
<feature type="chain" id="PRO_0000133485" description="Major capsid protein L1">
    <location>
        <begin position="1"/>
        <end position="532"/>
    </location>
</feature>
<feature type="region of interest" description="Disordered" evidence="2">
    <location>
        <begin position="512"/>
        <end position="532"/>
    </location>
</feature>
<feature type="disulfide bond" description="Interchain (with C-457)" evidence="1">
    <location>
        <position position="203"/>
    </location>
</feature>
<feature type="disulfide bond" description="Interchain (with C-203)" evidence="1">
    <location>
        <position position="457"/>
    </location>
</feature>
<gene>
    <name evidence="1" type="primary">L1</name>
</gene>
<protein>
    <recommendedName>
        <fullName evidence="1">Major capsid protein L1</fullName>
    </recommendedName>
</protein>
<name>VL1_HPV03</name>
<reference key="1">
    <citation type="journal article" date="1994" name="Curr. Top. Microbiol. Immunol.">
        <title>Primer-directed sequencing of human papillomavirus types.</title>
        <authorList>
            <person name="Delius H."/>
            <person name="Hofmann B."/>
        </authorList>
    </citation>
    <scope>NUCLEOTIDE SEQUENCE [GENOMIC DNA]</scope>
</reference>
<comment type="function">
    <text evidence="1">Forms an icosahedral capsid with a T=7 symmetry and a 50 nm diameter. The capsid is composed of 72 pentamers linked to each other by disulfide bonds and associated with L2 proteins. Binds to heparan sulfate proteoglycans on cell surface of basal layer keratinocytes to provide initial virion attachment. This binding mediates a conformational change in the virus capsid that facilitates efficient infection. The virion enters the host cell via endocytosis. During virus trafficking, L1 protein dissociates from the viral DNA and the genomic DNA is released to the host nucleus. The virion assembly takes place within the cell nucleus. Encapsulates the genomic DNA together with protein L2.</text>
</comment>
<comment type="subunit">
    <text evidence="1">Self-assembles into homopentamers. The capsid has an icosahedral symmetry and consists of 72 capsomers, with each capsomer being a pentamer of L1. Interacts with the minor capsid protein L2; this interaction is necessary for viral genome encapsidation. Interacts with protein E2; this interaction enhances E2-dependent replication and transcription activation.</text>
</comment>
<comment type="subcellular location">
    <subcellularLocation>
        <location evidence="1">Virion</location>
    </subcellularLocation>
    <subcellularLocation>
        <location evidence="1">Host nucleus</location>
    </subcellularLocation>
</comment>
<comment type="similarity">
    <text evidence="1">Belongs to the papillomaviridae L1 protein family.</text>
</comment>
<comment type="caution">
    <text evidence="3">It is uncertain whether Met-1 or Met-29 is the initiator.</text>
</comment>
<accession>P36731</accession>
<evidence type="ECO:0000255" key="1">
    <source>
        <dbReference type="HAMAP-Rule" id="MF_04002"/>
    </source>
</evidence>
<evidence type="ECO:0000256" key="2">
    <source>
        <dbReference type="SAM" id="MobiDB-lite"/>
    </source>
</evidence>
<evidence type="ECO:0000305" key="3"/>
<organism>
    <name type="scientific">Human papillomavirus 3</name>
    <dbReference type="NCBI Taxonomy" id="10614"/>
    <lineage>
        <taxon>Viruses</taxon>
        <taxon>Monodnaviria</taxon>
        <taxon>Shotokuvirae</taxon>
        <taxon>Cossaviricota</taxon>
        <taxon>Papovaviricetes</taxon>
        <taxon>Zurhausenvirales</taxon>
        <taxon>Papillomaviridae</taxon>
        <taxon>Firstpapillomavirinae</taxon>
        <taxon>Alphapapillomavirus</taxon>
        <taxon>Alphapapillomavirus 2</taxon>
    </lineage>
</organism>
<keyword id="KW-0167">Capsid protein</keyword>
<keyword id="KW-1015">Disulfide bond</keyword>
<keyword id="KW-1048">Host nucleus</keyword>
<keyword id="KW-0945">Host-virus interaction</keyword>
<keyword id="KW-0426">Late protein</keyword>
<keyword id="KW-1145">T=7 icosahedral capsid protein</keyword>
<keyword id="KW-1161">Viral attachment to host cell</keyword>
<keyword id="KW-1162">Viral penetration into host cytoplasm</keyword>
<keyword id="KW-0946">Virion</keyword>
<keyword id="KW-1164">Virus endocytosis by host</keyword>
<keyword id="KW-1160">Virus entry into host cell</keyword>
<sequence length="532" mass="59194">MAGIFIYGLSPSFCPDVVAVNVSHIFLQMALWRSSDNLVYLPPTPVSKVLSTDDYVTRTNIYYYAGSSRLLTVGHPYFAIPKSSNSKMDIPKVSAFQYRVFRVRLPDPNKFGLPDARIYNPDAERLVWACTGVEVGRGLPLGVGLSGHPLYNKLDDTENSNIAHGDIGKDSRDNISVDNKQTQLCIVGCTPPMGEHWGKGTPCKQNASPGDCPPLELITAPIQDGDMVDTGYGAMDFGNLQSNKSDVPLDICQTTCKYPDYLGMAAEPYGDSMFFYLRKEQLFARHFLNRAGMAGDTVPDALYIKGDSQSGGRDKIGSAVYCPTPSGSMVTSETQLFNKPYWLRRAQGHNNGICWANQLFVTVVDTTRSTNMTLCVSTETSATYDATKFKEYLRHGEEYDLQFIFQLCKVTLTPEIMAYLHTMNSTLLEDWNFGLTLPPSTSLEDTYRFLTSSAITCQKDAPPTEKQDPYAKLNFWDVDLKDRFSLDLSQFPLGRKFLMQLGVGTRSSISVRKRSATTTSRTAAAKRKRTKK</sequence>
<organismHost>
    <name type="scientific">Homo sapiens</name>
    <name type="common">Human</name>
    <dbReference type="NCBI Taxonomy" id="9606"/>
</organismHost>